<keyword id="KW-0165">Cleavage on pair of basic residues</keyword>
<keyword id="KW-1015">Disulfide bond</keyword>
<keyword id="KW-0379">Hydroxylation</keyword>
<keyword id="KW-0528">Neurotoxin</keyword>
<keyword id="KW-0964">Secreted</keyword>
<keyword id="KW-0732">Signal</keyword>
<keyword id="KW-0800">Toxin</keyword>
<organism>
    <name type="scientific">Conus tessulatus</name>
    <name type="common">Tessellate cone</name>
    <dbReference type="NCBI Taxonomy" id="101317"/>
    <lineage>
        <taxon>Eukaryota</taxon>
        <taxon>Metazoa</taxon>
        <taxon>Spiralia</taxon>
        <taxon>Lophotrochozoa</taxon>
        <taxon>Mollusca</taxon>
        <taxon>Gastropoda</taxon>
        <taxon>Caenogastropoda</taxon>
        <taxon>Neogastropoda</taxon>
        <taxon>Conoidea</taxon>
        <taxon>Conidae</taxon>
        <taxon>Conus</taxon>
        <taxon>Tesselliconus</taxon>
    </lineage>
</organism>
<accession>Q9BPI4</accession>
<proteinExistence type="evidence at transcript level"/>
<protein>
    <recommendedName>
        <fullName>Conotoxin TsMMSK-011</fullName>
    </recommendedName>
    <alternativeName>
        <fullName>Conotoxin TsMMSK-012</fullName>
    </alternativeName>
</protein>
<name>M23C_CONTS</name>
<evidence type="ECO:0000250" key="1"/>
<evidence type="ECO:0000250" key="2">
    <source>
        <dbReference type="UniProtKB" id="P0CI24"/>
    </source>
</evidence>
<evidence type="ECO:0000255" key="3"/>
<evidence type="ECO:0000305" key="4"/>
<dbReference type="EMBL" id="AF214940">
    <property type="protein sequence ID" value="AAG60368.1"/>
    <property type="molecule type" value="mRNA"/>
</dbReference>
<dbReference type="ConoServer" id="627">
    <property type="toxin name" value="Ts3.4 precursor"/>
</dbReference>
<dbReference type="GO" id="GO:0005576">
    <property type="term" value="C:extracellular region"/>
    <property type="evidence" value="ECO:0007669"/>
    <property type="project" value="UniProtKB-SubCell"/>
</dbReference>
<dbReference type="GO" id="GO:0008200">
    <property type="term" value="F:ion channel inhibitor activity"/>
    <property type="evidence" value="ECO:0007669"/>
    <property type="project" value="InterPro"/>
</dbReference>
<dbReference type="GO" id="GO:0090729">
    <property type="term" value="F:toxin activity"/>
    <property type="evidence" value="ECO:0007669"/>
    <property type="project" value="UniProtKB-KW"/>
</dbReference>
<dbReference type="InterPro" id="IPR017896">
    <property type="entry name" value="4Fe4S_Fe-S-bd"/>
</dbReference>
<dbReference type="InterPro" id="IPR004214">
    <property type="entry name" value="Conotoxin"/>
</dbReference>
<dbReference type="Pfam" id="PF02950">
    <property type="entry name" value="Conotoxin"/>
    <property type="match status" value="1"/>
</dbReference>
<comment type="subcellular location">
    <subcellularLocation>
        <location evidence="1">Secreted</location>
    </subcellularLocation>
</comment>
<comment type="tissue specificity">
    <text>Expressed by the venom duct.</text>
</comment>
<comment type="domain">
    <text>The cysteine framework is III (CC-C-C-CC). Classified in the M-2 branch, since 2 residues stand between the fourth and the fifth cysteine residues.</text>
</comment>
<comment type="similarity">
    <text evidence="4">Belongs to the conotoxin M superfamily.</text>
</comment>
<reference key="1">
    <citation type="journal article" date="2001" name="Mol. Biol. Evol.">
        <title>Mechanisms for evolving hypervariability: the case of conopeptides.</title>
        <authorList>
            <person name="Conticello S.G."/>
            <person name="Gilad Y."/>
            <person name="Avidan N."/>
            <person name="Ben-Asher E."/>
            <person name="Levy Z."/>
            <person name="Fainzilber M."/>
        </authorList>
    </citation>
    <scope>NUCLEOTIDE SEQUENCE [MRNA]</scope>
    <source>
        <tissue>Venom duct</tissue>
    </source>
</reference>
<feature type="signal peptide" evidence="3">
    <location>
        <begin position="1"/>
        <end position="22"/>
    </location>
</feature>
<feature type="propeptide" id="PRO_0000404914" evidence="1">
    <location>
        <begin position="23"/>
        <end position="50"/>
    </location>
</feature>
<feature type="peptide" id="PRO_0000404915" description="Conotoxin TsMMSK-011">
    <location>
        <begin position="53"/>
        <end position="67"/>
    </location>
</feature>
<feature type="modified residue" description="4-hydroxyproline" evidence="1">
    <location>
        <position position="63"/>
    </location>
</feature>
<feature type="disulfide bond" evidence="2">
    <location>
        <begin position="53"/>
        <end position="65"/>
    </location>
</feature>
<feature type="disulfide bond" evidence="2">
    <location>
        <begin position="54"/>
        <end position="61"/>
    </location>
</feature>
<feature type="disulfide bond" evidence="2">
    <location>
        <begin position="58"/>
        <end position="64"/>
    </location>
</feature>
<sequence length="67" mass="7593">MMSKLGVLLTICLLLFPLTVLPMDGDQPADLPALRTQDIATDQSPWFDPVKRCCSRYCWKCIPCCPY</sequence>